<sequence length="847" mass="95248">MMATEKISPGMQQYLDIKAQYPDAFLLFRMGDFYELFYEDAVEAAQILELSLTSRNKNAENPIPMAGVPYHAAQQYIDTLVELGHKVAIAEQMEDPKQAVGVVKREVVQVITPGTVTDSSKMGADSNYLVAIDRQGVQFALSYMDVSTGQFFVTSLDDFTSLCGEIRNLRARELVIGYALSEEEEQVFSNQMNLLLSFEDEVTEDVQLIDNSLTDLEKAAAGKLLSYLHRTQMRDLSHLQKVVHYEIKDYLQMDYATKSSLDLLENGRTGKKHGSLYWLLDETKTAMGMRLLRTWIDRPLIDLKRIENRQAVVQVFLDYFFERSDLVEALKGVYDIERLASRVSFGKTMPKDLLQLSQTLGNIPAIKNILQQINEPALGNLVAGLDPIPELHALISSAIDPEAQGTITDGNIIRTGFDETLDQYRLVMREGAGWIAEIEAKEREASGINNLKIDYNKKDGYYFHVTNSNLGNVPDHFFRKATLKNSERYGTEELAKIEGQMLEARDKSANLEYEIFMRIRQEVEKYIGRLQKLARTIATIDVLQAFAVVAEQQHLVCPRFTDQRELTIDRGRHAVVEKVMGKQTYIPNSIHLNTDTHMQLITGPNMSGKSTYMRQLAVIVIMAQMGSYVPADQAELPIFDAIFTRIGAADDLVSGQSTFMVEMMEANKAVRLATDRSLILFDELGRGTATYDGMALAQSIIEYIHDKIGAKTLFATHYHELTDLSQTLEHLENVHVSTLEKDGQVTFLHKIAQGPADKSYGIHVAKIAGMPEELLQRADRILQTLENQAPTAPTHPAPSVVEEPSGQLDLFADTPSHPVLDELEKLDIYNMTPMEVMMAVAELKKKI</sequence>
<feature type="chain" id="PRO_1000075568" description="DNA mismatch repair protein MutS">
    <location>
        <begin position="1"/>
        <end position="847"/>
    </location>
</feature>
<feature type="binding site" evidence="1">
    <location>
        <begin position="603"/>
        <end position="610"/>
    </location>
    <ligand>
        <name>ATP</name>
        <dbReference type="ChEBI" id="CHEBI:30616"/>
    </ligand>
</feature>
<accession>A4W4J7</accession>
<comment type="function">
    <text evidence="1">This protein is involved in the repair of mismatches in DNA. It is possible that it carries out the mismatch recognition step. This protein has a weak ATPase activity.</text>
</comment>
<comment type="similarity">
    <text evidence="1">Belongs to the DNA mismatch repair MutS family.</text>
</comment>
<gene>
    <name evidence="1" type="primary">mutS</name>
    <name type="ordered locus">SSU98_2128</name>
</gene>
<name>MUTS_STRS2</name>
<organism>
    <name type="scientific">Streptococcus suis (strain 98HAH33)</name>
    <dbReference type="NCBI Taxonomy" id="391296"/>
    <lineage>
        <taxon>Bacteria</taxon>
        <taxon>Bacillati</taxon>
        <taxon>Bacillota</taxon>
        <taxon>Bacilli</taxon>
        <taxon>Lactobacillales</taxon>
        <taxon>Streptococcaceae</taxon>
        <taxon>Streptococcus</taxon>
    </lineage>
</organism>
<reference key="1">
    <citation type="journal article" date="2007" name="PLoS ONE">
        <title>A glimpse of streptococcal toxic shock syndrome from comparative genomics of S. suis 2 Chinese isolates.</title>
        <authorList>
            <person name="Chen C."/>
            <person name="Tang J."/>
            <person name="Dong W."/>
            <person name="Wang C."/>
            <person name="Feng Y."/>
            <person name="Wang J."/>
            <person name="Zheng F."/>
            <person name="Pan X."/>
            <person name="Liu D."/>
            <person name="Li M."/>
            <person name="Song Y."/>
            <person name="Zhu X."/>
            <person name="Sun H."/>
            <person name="Feng T."/>
            <person name="Guo Z."/>
            <person name="Ju A."/>
            <person name="Ge J."/>
            <person name="Dong Y."/>
            <person name="Sun W."/>
            <person name="Jiang Y."/>
            <person name="Wang J."/>
            <person name="Yan J."/>
            <person name="Yang H."/>
            <person name="Wang X."/>
            <person name="Gao G.F."/>
            <person name="Yang R."/>
            <person name="Wang J."/>
            <person name="Yu J."/>
        </authorList>
    </citation>
    <scope>NUCLEOTIDE SEQUENCE [LARGE SCALE GENOMIC DNA]</scope>
    <source>
        <strain>98HAH33</strain>
    </source>
</reference>
<keyword id="KW-0067">ATP-binding</keyword>
<keyword id="KW-0227">DNA damage</keyword>
<keyword id="KW-0234">DNA repair</keyword>
<keyword id="KW-0238">DNA-binding</keyword>
<keyword id="KW-0547">Nucleotide-binding</keyword>
<dbReference type="EMBL" id="CP000408">
    <property type="protein sequence ID" value="ABP93286.1"/>
    <property type="molecule type" value="Genomic_DNA"/>
</dbReference>
<dbReference type="SMR" id="A4W4J7"/>
<dbReference type="KEGG" id="ssv:SSU98_2128"/>
<dbReference type="HOGENOM" id="CLU_002472_4_0_9"/>
<dbReference type="GO" id="GO:0005829">
    <property type="term" value="C:cytosol"/>
    <property type="evidence" value="ECO:0007669"/>
    <property type="project" value="TreeGrafter"/>
</dbReference>
<dbReference type="GO" id="GO:0005524">
    <property type="term" value="F:ATP binding"/>
    <property type="evidence" value="ECO:0007669"/>
    <property type="project" value="UniProtKB-UniRule"/>
</dbReference>
<dbReference type="GO" id="GO:0140664">
    <property type="term" value="F:ATP-dependent DNA damage sensor activity"/>
    <property type="evidence" value="ECO:0007669"/>
    <property type="project" value="InterPro"/>
</dbReference>
<dbReference type="GO" id="GO:0003684">
    <property type="term" value="F:damaged DNA binding"/>
    <property type="evidence" value="ECO:0007669"/>
    <property type="project" value="UniProtKB-UniRule"/>
</dbReference>
<dbReference type="GO" id="GO:0030983">
    <property type="term" value="F:mismatched DNA binding"/>
    <property type="evidence" value="ECO:0007669"/>
    <property type="project" value="InterPro"/>
</dbReference>
<dbReference type="GO" id="GO:0006298">
    <property type="term" value="P:mismatch repair"/>
    <property type="evidence" value="ECO:0007669"/>
    <property type="project" value="UniProtKB-UniRule"/>
</dbReference>
<dbReference type="CDD" id="cd03284">
    <property type="entry name" value="ABC_MutS1"/>
    <property type="match status" value="1"/>
</dbReference>
<dbReference type="FunFam" id="1.10.1420.10:FF:000001">
    <property type="entry name" value="DNA mismatch repair protein MutS"/>
    <property type="match status" value="1"/>
</dbReference>
<dbReference type="FunFam" id="3.40.1170.10:FF:000001">
    <property type="entry name" value="DNA mismatch repair protein MutS"/>
    <property type="match status" value="1"/>
</dbReference>
<dbReference type="FunFam" id="3.40.50.300:FF:000896">
    <property type="entry name" value="DNA mismatch repair protein MutS"/>
    <property type="match status" value="1"/>
</dbReference>
<dbReference type="Gene3D" id="1.10.1420.10">
    <property type="match status" value="2"/>
</dbReference>
<dbReference type="Gene3D" id="3.40.1170.10">
    <property type="entry name" value="DNA repair protein MutS, domain I"/>
    <property type="match status" value="1"/>
</dbReference>
<dbReference type="Gene3D" id="3.30.420.110">
    <property type="entry name" value="MutS, connector domain"/>
    <property type="match status" value="1"/>
</dbReference>
<dbReference type="Gene3D" id="3.40.50.300">
    <property type="entry name" value="P-loop containing nucleotide triphosphate hydrolases"/>
    <property type="match status" value="1"/>
</dbReference>
<dbReference type="HAMAP" id="MF_00096">
    <property type="entry name" value="MutS"/>
    <property type="match status" value="1"/>
</dbReference>
<dbReference type="InterPro" id="IPR005748">
    <property type="entry name" value="DNA_mismatch_repair_MutS"/>
</dbReference>
<dbReference type="InterPro" id="IPR007695">
    <property type="entry name" value="DNA_mismatch_repair_MutS-lik_N"/>
</dbReference>
<dbReference type="InterPro" id="IPR017261">
    <property type="entry name" value="DNA_mismatch_repair_MutS/MSH"/>
</dbReference>
<dbReference type="InterPro" id="IPR000432">
    <property type="entry name" value="DNA_mismatch_repair_MutS_C"/>
</dbReference>
<dbReference type="InterPro" id="IPR007861">
    <property type="entry name" value="DNA_mismatch_repair_MutS_clamp"/>
</dbReference>
<dbReference type="InterPro" id="IPR007696">
    <property type="entry name" value="DNA_mismatch_repair_MutS_core"/>
</dbReference>
<dbReference type="InterPro" id="IPR016151">
    <property type="entry name" value="DNA_mismatch_repair_MutS_N"/>
</dbReference>
<dbReference type="InterPro" id="IPR036187">
    <property type="entry name" value="DNA_mismatch_repair_MutS_sf"/>
</dbReference>
<dbReference type="InterPro" id="IPR007860">
    <property type="entry name" value="DNA_mmatch_repair_MutS_con_dom"/>
</dbReference>
<dbReference type="InterPro" id="IPR045076">
    <property type="entry name" value="MutS"/>
</dbReference>
<dbReference type="InterPro" id="IPR036678">
    <property type="entry name" value="MutS_con_dom_sf"/>
</dbReference>
<dbReference type="InterPro" id="IPR027417">
    <property type="entry name" value="P-loop_NTPase"/>
</dbReference>
<dbReference type="NCBIfam" id="TIGR01070">
    <property type="entry name" value="mutS1"/>
    <property type="match status" value="1"/>
</dbReference>
<dbReference type="NCBIfam" id="NF003810">
    <property type="entry name" value="PRK05399.1"/>
    <property type="match status" value="1"/>
</dbReference>
<dbReference type="PANTHER" id="PTHR11361:SF34">
    <property type="entry name" value="DNA MISMATCH REPAIR PROTEIN MSH1, MITOCHONDRIAL"/>
    <property type="match status" value="1"/>
</dbReference>
<dbReference type="PANTHER" id="PTHR11361">
    <property type="entry name" value="DNA MISMATCH REPAIR PROTEIN MUTS FAMILY MEMBER"/>
    <property type="match status" value="1"/>
</dbReference>
<dbReference type="Pfam" id="PF01624">
    <property type="entry name" value="MutS_I"/>
    <property type="match status" value="1"/>
</dbReference>
<dbReference type="Pfam" id="PF05188">
    <property type="entry name" value="MutS_II"/>
    <property type="match status" value="1"/>
</dbReference>
<dbReference type="Pfam" id="PF05192">
    <property type="entry name" value="MutS_III"/>
    <property type="match status" value="1"/>
</dbReference>
<dbReference type="Pfam" id="PF05190">
    <property type="entry name" value="MutS_IV"/>
    <property type="match status" value="1"/>
</dbReference>
<dbReference type="Pfam" id="PF00488">
    <property type="entry name" value="MutS_V"/>
    <property type="match status" value="1"/>
</dbReference>
<dbReference type="PIRSF" id="PIRSF037677">
    <property type="entry name" value="DNA_mis_repair_Msh6"/>
    <property type="match status" value="1"/>
</dbReference>
<dbReference type="SMART" id="SM00534">
    <property type="entry name" value="MUTSac"/>
    <property type="match status" value="1"/>
</dbReference>
<dbReference type="SMART" id="SM00533">
    <property type="entry name" value="MUTSd"/>
    <property type="match status" value="1"/>
</dbReference>
<dbReference type="SUPFAM" id="SSF55271">
    <property type="entry name" value="DNA repair protein MutS, domain I"/>
    <property type="match status" value="1"/>
</dbReference>
<dbReference type="SUPFAM" id="SSF53150">
    <property type="entry name" value="DNA repair protein MutS, domain II"/>
    <property type="match status" value="1"/>
</dbReference>
<dbReference type="SUPFAM" id="SSF48334">
    <property type="entry name" value="DNA repair protein MutS, domain III"/>
    <property type="match status" value="1"/>
</dbReference>
<dbReference type="SUPFAM" id="SSF52540">
    <property type="entry name" value="P-loop containing nucleoside triphosphate hydrolases"/>
    <property type="match status" value="1"/>
</dbReference>
<dbReference type="PROSITE" id="PS00486">
    <property type="entry name" value="DNA_MISMATCH_REPAIR_2"/>
    <property type="match status" value="1"/>
</dbReference>
<evidence type="ECO:0000255" key="1">
    <source>
        <dbReference type="HAMAP-Rule" id="MF_00096"/>
    </source>
</evidence>
<protein>
    <recommendedName>
        <fullName evidence="1">DNA mismatch repair protein MutS</fullName>
    </recommendedName>
</protein>
<proteinExistence type="inferred from homology"/>